<reference key="1">
    <citation type="journal article" date="2004" name="J. Bacteriol.">
        <title>Complete genome sequence of Rickettsia typhi and comparison with sequences of other Rickettsiae.</title>
        <authorList>
            <person name="McLeod M.P."/>
            <person name="Qin X."/>
            <person name="Karpathy S.E."/>
            <person name="Gioia J."/>
            <person name="Highlander S.K."/>
            <person name="Fox G.E."/>
            <person name="McNeill T.Z."/>
            <person name="Jiang H."/>
            <person name="Muzny D."/>
            <person name="Jacob L.S."/>
            <person name="Hawes A.C."/>
            <person name="Sodergren E."/>
            <person name="Gill R."/>
            <person name="Hume J."/>
            <person name="Morgan M."/>
            <person name="Fan G."/>
            <person name="Amin A.G."/>
            <person name="Gibbs R.A."/>
            <person name="Hong C."/>
            <person name="Yu X.-J."/>
            <person name="Walker D.H."/>
            <person name="Weinstock G.M."/>
        </authorList>
    </citation>
    <scope>NUCLEOTIDE SEQUENCE [LARGE SCALE GENOMIC DNA]</scope>
    <source>
        <strain>ATCC VR-144 / Wilmington</strain>
    </source>
</reference>
<gene>
    <name evidence="1" type="primary">lolD</name>
    <name type="ordered locus">RT0695</name>
</gene>
<feature type="chain" id="PRO_0000260198" description="Lipoprotein-releasing system ATP-binding protein LolD">
    <location>
        <begin position="1"/>
        <end position="221"/>
    </location>
</feature>
<feature type="domain" description="ABC transporter" evidence="1">
    <location>
        <begin position="6"/>
        <end position="220"/>
    </location>
</feature>
<feature type="binding site" evidence="1">
    <location>
        <begin position="42"/>
        <end position="49"/>
    </location>
    <ligand>
        <name>ATP</name>
        <dbReference type="ChEBI" id="CHEBI:30616"/>
    </ligand>
</feature>
<evidence type="ECO:0000255" key="1">
    <source>
        <dbReference type="HAMAP-Rule" id="MF_01708"/>
    </source>
</evidence>
<name>LOLD_RICTY</name>
<sequence length="221" mass="24812">MNNTVLILKKISKHYKQGNTIVKVLDDLNLTANEGELIAIIGSSGSGKSTLLHIAGLLDKPTNGQVIIPNSKYKKYHLIRLYYLGFIYQQHHLLKDFTALENVIIPRLIRGLDQKEAIRDATKILDDLGLEKKLYNMPGELSGGEQQRVAIARSLINKPRIILADEPTGNLDPKSTNEVFNLFLKVAQKQNTTVIMVTHNHELAHKMDKLYNLKNGLLNIA</sequence>
<proteinExistence type="inferred from homology"/>
<keyword id="KW-0067">ATP-binding</keyword>
<keyword id="KW-0997">Cell inner membrane</keyword>
<keyword id="KW-1003">Cell membrane</keyword>
<keyword id="KW-0472">Membrane</keyword>
<keyword id="KW-0547">Nucleotide-binding</keyword>
<keyword id="KW-1278">Translocase</keyword>
<keyword id="KW-0813">Transport</keyword>
<comment type="function">
    <text evidence="1">Part of the ABC transporter complex LolCDE involved in the translocation of mature outer membrane-directed lipoproteins, from the inner membrane to the periplasmic chaperone, LolA. Responsible for the formation of the LolA-lipoprotein complex in an ATP-dependent manner.</text>
</comment>
<comment type="subunit">
    <text evidence="1">The complex is composed of two ATP-binding proteins (LolD) and two transmembrane proteins (LolC and LolE).</text>
</comment>
<comment type="subcellular location">
    <subcellularLocation>
        <location evidence="1">Cell inner membrane</location>
        <topology evidence="1">Peripheral membrane protein</topology>
    </subcellularLocation>
</comment>
<comment type="similarity">
    <text evidence="1">Belongs to the ABC transporter superfamily. Lipoprotein translocase (TC 3.A.1.125) family.</text>
</comment>
<accession>Q68W38</accession>
<organism>
    <name type="scientific">Rickettsia typhi (strain ATCC VR-144 / Wilmington)</name>
    <dbReference type="NCBI Taxonomy" id="257363"/>
    <lineage>
        <taxon>Bacteria</taxon>
        <taxon>Pseudomonadati</taxon>
        <taxon>Pseudomonadota</taxon>
        <taxon>Alphaproteobacteria</taxon>
        <taxon>Rickettsiales</taxon>
        <taxon>Rickettsiaceae</taxon>
        <taxon>Rickettsieae</taxon>
        <taxon>Rickettsia</taxon>
        <taxon>typhus group</taxon>
    </lineage>
</organism>
<protein>
    <recommendedName>
        <fullName evidence="1">Lipoprotein-releasing system ATP-binding protein LolD</fullName>
        <ecNumber evidence="1">7.6.2.-</ecNumber>
    </recommendedName>
</protein>
<dbReference type="EC" id="7.6.2.-" evidence="1"/>
<dbReference type="EMBL" id="AE017197">
    <property type="protein sequence ID" value="AAU04154.1"/>
    <property type="molecule type" value="Genomic_DNA"/>
</dbReference>
<dbReference type="RefSeq" id="WP_011191131.1">
    <property type="nucleotide sequence ID" value="NC_006142.1"/>
</dbReference>
<dbReference type="SMR" id="Q68W38"/>
<dbReference type="KEGG" id="rty:RT0695"/>
<dbReference type="eggNOG" id="COG1136">
    <property type="taxonomic scope" value="Bacteria"/>
</dbReference>
<dbReference type="HOGENOM" id="CLU_000604_1_22_5"/>
<dbReference type="OrthoDB" id="9802264at2"/>
<dbReference type="Proteomes" id="UP000000604">
    <property type="component" value="Chromosome"/>
</dbReference>
<dbReference type="GO" id="GO:0005886">
    <property type="term" value="C:plasma membrane"/>
    <property type="evidence" value="ECO:0007669"/>
    <property type="project" value="UniProtKB-SubCell"/>
</dbReference>
<dbReference type="GO" id="GO:0005524">
    <property type="term" value="F:ATP binding"/>
    <property type="evidence" value="ECO:0007669"/>
    <property type="project" value="UniProtKB-KW"/>
</dbReference>
<dbReference type="GO" id="GO:0016887">
    <property type="term" value="F:ATP hydrolysis activity"/>
    <property type="evidence" value="ECO:0007669"/>
    <property type="project" value="InterPro"/>
</dbReference>
<dbReference type="CDD" id="cd03255">
    <property type="entry name" value="ABC_MJ0796_LolCDE_FtsE"/>
    <property type="match status" value="1"/>
</dbReference>
<dbReference type="FunFam" id="3.40.50.300:FF:000032">
    <property type="entry name" value="Export ABC transporter ATP-binding protein"/>
    <property type="match status" value="1"/>
</dbReference>
<dbReference type="Gene3D" id="3.40.50.300">
    <property type="entry name" value="P-loop containing nucleotide triphosphate hydrolases"/>
    <property type="match status" value="1"/>
</dbReference>
<dbReference type="InterPro" id="IPR003593">
    <property type="entry name" value="AAA+_ATPase"/>
</dbReference>
<dbReference type="InterPro" id="IPR003439">
    <property type="entry name" value="ABC_transporter-like_ATP-bd"/>
</dbReference>
<dbReference type="InterPro" id="IPR017871">
    <property type="entry name" value="ABC_transporter-like_CS"/>
</dbReference>
<dbReference type="InterPro" id="IPR017911">
    <property type="entry name" value="MacB-like_ATP-bd"/>
</dbReference>
<dbReference type="InterPro" id="IPR027417">
    <property type="entry name" value="P-loop_NTPase"/>
</dbReference>
<dbReference type="PANTHER" id="PTHR42798:SF7">
    <property type="entry name" value="ALPHA-D-RIBOSE 1-METHYLPHOSPHONATE 5-TRIPHOSPHATE SYNTHASE SUBUNIT PHNL"/>
    <property type="match status" value="1"/>
</dbReference>
<dbReference type="PANTHER" id="PTHR42798">
    <property type="entry name" value="LIPOPROTEIN-RELEASING SYSTEM ATP-BINDING PROTEIN LOLD"/>
    <property type="match status" value="1"/>
</dbReference>
<dbReference type="Pfam" id="PF00005">
    <property type="entry name" value="ABC_tran"/>
    <property type="match status" value="1"/>
</dbReference>
<dbReference type="SMART" id="SM00382">
    <property type="entry name" value="AAA"/>
    <property type="match status" value="1"/>
</dbReference>
<dbReference type="SUPFAM" id="SSF52540">
    <property type="entry name" value="P-loop containing nucleoside triphosphate hydrolases"/>
    <property type="match status" value="1"/>
</dbReference>
<dbReference type="PROSITE" id="PS00211">
    <property type="entry name" value="ABC_TRANSPORTER_1"/>
    <property type="match status" value="1"/>
</dbReference>
<dbReference type="PROSITE" id="PS50893">
    <property type="entry name" value="ABC_TRANSPORTER_2"/>
    <property type="match status" value="1"/>
</dbReference>
<dbReference type="PROSITE" id="PS51244">
    <property type="entry name" value="LOLD"/>
    <property type="match status" value="1"/>
</dbReference>